<keyword id="KW-0131">Cell cycle</keyword>
<keyword id="KW-0132">Cell division</keyword>
<keyword id="KW-0963">Cytoplasm</keyword>
<keyword id="KW-1185">Reference proteome</keyword>
<keyword id="KW-0717">Septation</keyword>
<feature type="chain" id="PRO_0000334007" description="Cell division protein SepF 2">
    <location>
        <begin position="1"/>
        <end position="161"/>
    </location>
</feature>
<feature type="region of interest" description="Disordered" evidence="2">
    <location>
        <begin position="19"/>
        <end position="47"/>
    </location>
</feature>
<feature type="compositionally biased region" description="Basic and acidic residues" evidence="2">
    <location>
        <begin position="21"/>
        <end position="35"/>
    </location>
</feature>
<proteinExistence type="inferred from homology"/>
<evidence type="ECO:0000255" key="1">
    <source>
        <dbReference type="HAMAP-Rule" id="MF_01197"/>
    </source>
</evidence>
<evidence type="ECO:0000256" key="2">
    <source>
        <dbReference type="SAM" id="MobiDB-lite"/>
    </source>
</evidence>
<dbReference type="EMBL" id="CP000612">
    <property type="protein sequence ID" value="ABO49854.1"/>
    <property type="molecule type" value="Genomic_DNA"/>
</dbReference>
<dbReference type="RefSeq" id="WP_011877677.1">
    <property type="nucleotide sequence ID" value="NC_009253.1"/>
</dbReference>
<dbReference type="SMR" id="A4J451"/>
<dbReference type="STRING" id="349161.Dred_1320"/>
<dbReference type="KEGG" id="drm:Dred_1320"/>
<dbReference type="eggNOG" id="COG1799">
    <property type="taxonomic scope" value="Bacteria"/>
</dbReference>
<dbReference type="HOGENOM" id="CLU_078499_4_0_9"/>
<dbReference type="OrthoDB" id="9815206at2"/>
<dbReference type="Proteomes" id="UP000001556">
    <property type="component" value="Chromosome"/>
</dbReference>
<dbReference type="GO" id="GO:0005737">
    <property type="term" value="C:cytoplasm"/>
    <property type="evidence" value="ECO:0007669"/>
    <property type="project" value="UniProtKB-SubCell"/>
</dbReference>
<dbReference type="GO" id="GO:0000917">
    <property type="term" value="P:division septum assembly"/>
    <property type="evidence" value="ECO:0007669"/>
    <property type="project" value="UniProtKB-KW"/>
</dbReference>
<dbReference type="GO" id="GO:0043093">
    <property type="term" value="P:FtsZ-dependent cytokinesis"/>
    <property type="evidence" value="ECO:0007669"/>
    <property type="project" value="UniProtKB-UniRule"/>
</dbReference>
<dbReference type="Gene3D" id="3.30.110.150">
    <property type="entry name" value="SepF-like protein"/>
    <property type="match status" value="1"/>
</dbReference>
<dbReference type="HAMAP" id="MF_01197">
    <property type="entry name" value="SepF"/>
    <property type="match status" value="1"/>
</dbReference>
<dbReference type="InterPro" id="IPR023052">
    <property type="entry name" value="Cell_div_SepF"/>
</dbReference>
<dbReference type="InterPro" id="IPR007561">
    <property type="entry name" value="Cell_div_SepF/SepF-rel"/>
</dbReference>
<dbReference type="InterPro" id="IPR038594">
    <property type="entry name" value="SepF-like_sf"/>
</dbReference>
<dbReference type="PANTHER" id="PTHR35798">
    <property type="entry name" value="CELL DIVISION PROTEIN SEPF"/>
    <property type="match status" value="1"/>
</dbReference>
<dbReference type="PANTHER" id="PTHR35798:SF1">
    <property type="entry name" value="CELL DIVISION PROTEIN SEPF"/>
    <property type="match status" value="1"/>
</dbReference>
<dbReference type="Pfam" id="PF04472">
    <property type="entry name" value="SepF"/>
    <property type="match status" value="1"/>
</dbReference>
<sequence>MSKAFLDKFLNFIGFEEVEDSEKAPELSSSRETKTKNQNQSKSLLRSELTAVPAPRSTKIISTQPRTFTDVQTVAEHLKNGQPVVVNLSQVHPEEAQRILDYTSGVAFALDGSAKKINGEIFLFVPSGVDIVGAGDLRTFNENVEPLEEKVNSRWFKTETA</sequence>
<comment type="function">
    <text evidence="1">Cell division protein that is part of the divisome complex and is recruited early to the Z-ring. Probably stimulates Z-ring formation, perhaps through the cross-linking of FtsZ protofilaments. Its function overlaps with FtsA.</text>
</comment>
<comment type="subunit">
    <text evidence="1">Homodimer. Interacts with FtsZ.</text>
</comment>
<comment type="subcellular location">
    <subcellularLocation>
        <location evidence="1">Cytoplasm</location>
    </subcellularLocation>
    <text evidence="1">Localizes to the division site, in a FtsZ-dependent manner.</text>
</comment>
<comment type="similarity">
    <text evidence="1">Belongs to the SepF family.</text>
</comment>
<organism>
    <name type="scientific">Desulforamulus reducens (strain ATCC BAA-1160 / DSM 100696 / MI-1)</name>
    <name type="common">Desulfotomaculum reducens</name>
    <dbReference type="NCBI Taxonomy" id="349161"/>
    <lineage>
        <taxon>Bacteria</taxon>
        <taxon>Bacillati</taxon>
        <taxon>Bacillota</taxon>
        <taxon>Clostridia</taxon>
        <taxon>Eubacteriales</taxon>
        <taxon>Peptococcaceae</taxon>
        <taxon>Desulforamulus</taxon>
    </lineage>
</organism>
<accession>A4J451</accession>
<gene>
    <name evidence="1" type="primary">sepF2</name>
    <name type="ordered locus">Dred_1320</name>
</gene>
<protein>
    <recommendedName>
        <fullName evidence="1">Cell division protein SepF 2</fullName>
    </recommendedName>
</protein>
<name>SEPF2_DESRM</name>
<reference key="1">
    <citation type="submission" date="2007-03" db="EMBL/GenBank/DDBJ databases">
        <title>Complete sequence of Desulfotomaculum reducens MI-1.</title>
        <authorList>
            <consortium name="US DOE Joint Genome Institute"/>
            <person name="Copeland A."/>
            <person name="Lucas S."/>
            <person name="Lapidus A."/>
            <person name="Barry K."/>
            <person name="Detter J.C."/>
            <person name="Glavina del Rio T."/>
            <person name="Hammon N."/>
            <person name="Israni S."/>
            <person name="Dalin E."/>
            <person name="Tice H."/>
            <person name="Pitluck S."/>
            <person name="Sims D."/>
            <person name="Brettin T."/>
            <person name="Bruce D."/>
            <person name="Han C."/>
            <person name="Tapia R."/>
            <person name="Schmutz J."/>
            <person name="Larimer F."/>
            <person name="Land M."/>
            <person name="Hauser L."/>
            <person name="Kyrpides N."/>
            <person name="Kim E."/>
            <person name="Tebo B.M."/>
            <person name="Richardson P."/>
        </authorList>
    </citation>
    <scope>NUCLEOTIDE SEQUENCE [LARGE SCALE GENOMIC DNA]</scope>
    <source>
        <strain>ATCC BAA-1160 / DSM 100696 / MI-1</strain>
    </source>
</reference>